<proteinExistence type="inferred from homology"/>
<dbReference type="EMBL" id="CP000726">
    <property type="protein sequence ID" value="ABS34405.1"/>
    <property type="molecule type" value="Genomic_DNA"/>
</dbReference>
<dbReference type="RefSeq" id="WP_003402814.1">
    <property type="nucleotide sequence ID" value="NC_009697.1"/>
</dbReference>
<dbReference type="SMR" id="A7FUR1"/>
<dbReference type="GeneID" id="5186111"/>
<dbReference type="KEGG" id="cba:CLB_1792"/>
<dbReference type="HOGENOM" id="CLU_045647_5_3_9"/>
<dbReference type="GO" id="GO:0005737">
    <property type="term" value="C:cytoplasm"/>
    <property type="evidence" value="ECO:0007669"/>
    <property type="project" value="UniProtKB-SubCell"/>
</dbReference>
<dbReference type="GO" id="GO:0051301">
    <property type="term" value="P:cell division"/>
    <property type="evidence" value="ECO:0007669"/>
    <property type="project" value="UniProtKB-KW"/>
</dbReference>
<dbReference type="GO" id="GO:0051304">
    <property type="term" value="P:chromosome separation"/>
    <property type="evidence" value="ECO:0007669"/>
    <property type="project" value="InterPro"/>
</dbReference>
<dbReference type="GO" id="GO:0006260">
    <property type="term" value="P:DNA replication"/>
    <property type="evidence" value="ECO:0007669"/>
    <property type="project" value="UniProtKB-UniRule"/>
</dbReference>
<dbReference type="Gene3D" id="1.10.10.10">
    <property type="entry name" value="Winged helix-like DNA-binding domain superfamily/Winged helix DNA-binding domain"/>
    <property type="match status" value="2"/>
</dbReference>
<dbReference type="HAMAP" id="MF_01804">
    <property type="entry name" value="ScpB"/>
    <property type="match status" value="1"/>
</dbReference>
<dbReference type="InterPro" id="IPR005234">
    <property type="entry name" value="ScpB_csome_segregation"/>
</dbReference>
<dbReference type="InterPro" id="IPR036388">
    <property type="entry name" value="WH-like_DNA-bd_sf"/>
</dbReference>
<dbReference type="InterPro" id="IPR036390">
    <property type="entry name" value="WH_DNA-bd_sf"/>
</dbReference>
<dbReference type="NCBIfam" id="TIGR00281">
    <property type="entry name" value="SMC-Scp complex subunit ScpB"/>
    <property type="match status" value="1"/>
</dbReference>
<dbReference type="PANTHER" id="PTHR34298">
    <property type="entry name" value="SEGREGATION AND CONDENSATION PROTEIN B"/>
    <property type="match status" value="1"/>
</dbReference>
<dbReference type="PANTHER" id="PTHR34298:SF2">
    <property type="entry name" value="SEGREGATION AND CONDENSATION PROTEIN B"/>
    <property type="match status" value="1"/>
</dbReference>
<dbReference type="Pfam" id="PF04079">
    <property type="entry name" value="SMC_ScpB"/>
    <property type="match status" value="1"/>
</dbReference>
<dbReference type="PIRSF" id="PIRSF019345">
    <property type="entry name" value="ScpB"/>
    <property type="match status" value="1"/>
</dbReference>
<dbReference type="SUPFAM" id="SSF46785">
    <property type="entry name" value="Winged helix' DNA-binding domain"/>
    <property type="match status" value="2"/>
</dbReference>
<protein>
    <recommendedName>
        <fullName evidence="1">Segregation and condensation protein B</fullName>
    </recommendedName>
</protein>
<evidence type="ECO:0000255" key="1">
    <source>
        <dbReference type="HAMAP-Rule" id="MF_01804"/>
    </source>
</evidence>
<accession>A7FUR1</accession>
<comment type="function">
    <text evidence="1">Participates in chromosomal partition during cell division. May act via the formation of a condensin-like complex containing Smc and ScpA that pull DNA away from mid-cell into both cell halves.</text>
</comment>
<comment type="subunit">
    <text evidence="1">Homodimer. Homodimerization may be required to stabilize the binding of ScpA to the Smc head domains. Component of a cohesin-like complex composed of ScpA, ScpB and the Smc homodimer, in which ScpA and ScpB bind to the head domain of Smc. The presence of the three proteins is required for the association of the complex with DNA.</text>
</comment>
<comment type="subcellular location">
    <subcellularLocation>
        <location evidence="1">Cytoplasm</location>
    </subcellularLocation>
    <text evidence="1">Associated with two foci at the outer edges of the nucleoid region in young cells, and at four foci within both cell halves in older cells.</text>
</comment>
<comment type="similarity">
    <text evidence="1">Belongs to the ScpB family.</text>
</comment>
<keyword id="KW-0131">Cell cycle</keyword>
<keyword id="KW-0132">Cell division</keyword>
<keyword id="KW-0159">Chromosome partition</keyword>
<keyword id="KW-0963">Cytoplasm</keyword>
<reference key="1">
    <citation type="journal article" date="2007" name="PLoS ONE">
        <title>Analysis of the neurotoxin complex genes in Clostridium botulinum A1-A4 and B1 strains: BoNT/A3, /Ba4 and /B1 clusters are located within plasmids.</title>
        <authorList>
            <person name="Smith T.J."/>
            <person name="Hill K.K."/>
            <person name="Foley B.T."/>
            <person name="Detter J.C."/>
            <person name="Munk A.C."/>
            <person name="Bruce D.C."/>
            <person name="Doggett N.A."/>
            <person name="Smith L.A."/>
            <person name="Marks J.D."/>
            <person name="Xie G."/>
            <person name="Brettin T.S."/>
        </authorList>
    </citation>
    <scope>NUCLEOTIDE SEQUENCE [LARGE SCALE GENOMIC DNA]</scope>
    <source>
        <strain>ATCC 19397 / Type A</strain>
    </source>
</reference>
<gene>
    <name evidence="1" type="primary">scpB</name>
    <name type="ordered locus">CLB_1792</name>
</gene>
<organism>
    <name type="scientific">Clostridium botulinum (strain ATCC 19397 / Type A)</name>
    <dbReference type="NCBI Taxonomy" id="441770"/>
    <lineage>
        <taxon>Bacteria</taxon>
        <taxon>Bacillati</taxon>
        <taxon>Bacillota</taxon>
        <taxon>Clostridia</taxon>
        <taxon>Eubacteriales</taxon>
        <taxon>Clostridiaceae</taxon>
        <taxon>Clostridium</taxon>
    </lineage>
</organism>
<sequence length="193" mass="21982">MNKDHEEQLEINEVSQKNKYKSIIESLLFMSGEPINIKDLATILNCKQDKVSSLLNEMNNSYVGKDRGIKILIHNRAVQLVTKPENSIYVEKLLKTNVRQSLSQAALETLSIIAYKQPITRVAIDEIRGVKSDRAIYTLLEKNIIKECGRLDVPGKPILYGTTEEFLKFFGLDSIEAIPNLEDLLKEFSKEEN</sequence>
<feature type="chain" id="PRO_1000069951" description="Segregation and condensation protein B">
    <location>
        <begin position="1"/>
        <end position="193"/>
    </location>
</feature>
<name>SCPB_CLOB1</name>